<keyword id="KW-1043">Host membrane</keyword>
<keyword id="KW-0472">Membrane</keyword>
<keyword id="KW-0964">Secreted</keyword>
<keyword id="KW-0843">Virulence</keyword>
<gene>
    <name type="primary">hopM1</name>
    <name type="synonym">hopPtoM</name>
    <name type="ordered locus">Psyr_1186</name>
</gene>
<name>HOPM1_PSEU2</name>
<accession>Q4ZX82</accession>
<protein>
    <recommendedName>
        <fullName>Effector protein hopM1</fullName>
    </recommendedName>
    <alternativeName>
        <fullName>Hrp outer protein M1</fullName>
    </alternativeName>
    <alternativeName>
        <fullName>Type III effector hopPtoM</fullName>
    </alternativeName>
</protein>
<proteinExistence type="inferred from homology"/>
<comment type="function">
    <text evidence="1">Involved in the suppression of basal resistance and promotion of disease symptoms in plants. May be involved in the inhibition of a host vesicle trafficking pathway (By similarity).</text>
</comment>
<comment type="subunit">
    <text evidence="1">Interacts with the chaperone ShcM.</text>
</comment>
<comment type="subcellular location">
    <subcellularLocation>
        <location evidence="1">Secreted</location>
    </subcellularLocation>
    <subcellularLocation>
        <location evidence="1">Host membrane</location>
    </subcellularLocation>
    <text evidence="1">Secreted via the type III secretion system (T3SS). Localized to the plant endomembrane (By similarity).</text>
</comment>
<dbReference type="EMBL" id="CP000075">
    <property type="protein sequence ID" value="AAY36240.1"/>
    <property type="molecule type" value="Genomic_DNA"/>
</dbReference>
<dbReference type="RefSeq" id="WP_011266874.1">
    <property type="nucleotide sequence ID" value="NC_007005.1"/>
</dbReference>
<dbReference type="RefSeq" id="YP_234278.1">
    <property type="nucleotide sequence ID" value="NC_007005.1"/>
</dbReference>
<dbReference type="STRING" id="205918.Psyr_1186"/>
<dbReference type="KEGG" id="psb:Psyr_1186"/>
<dbReference type="PATRIC" id="fig|205918.7.peg.1220"/>
<dbReference type="eggNOG" id="ENOG5031JIP">
    <property type="taxonomic scope" value="Bacteria"/>
</dbReference>
<dbReference type="HOGENOM" id="CLU_023400_0_0_6"/>
<dbReference type="OrthoDB" id="7005093at2"/>
<dbReference type="PHI-base" id="PHI:8430"/>
<dbReference type="PHI-base" id="PHI:998"/>
<dbReference type="Proteomes" id="UP000000426">
    <property type="component" value="Chromosome"/>
</dbReference>
<dbReference type="GO" id="GO:0005576">
    <property type="term" value="C:extracellular region"/>
    <property type="evidence" value="ECO:0007669"/>
    <property type="project" value="UniProtKB-SubCell"/>
</dbReference>
<dbReference type="GO" id="GO:0033644">
    <property type="term" value="C:host cell membrane"/>
    <property type="evidence" value="ECO:0007669"/>
    <property type="project" value="UniProtKB-SubCell"/>
</dbReference>
<dbReference type="GO" id="GO:0016020">
    <property type="term" value="C:membrane"/>
    <property type="evidence" value="ECO:0007669"/>
    <property type="project" value="UniProtKB-KW"/>
</dbReference>
<sequence>MIGTRVGGSGSTEIVQANQPQPSAAVAQAHPHAVSPSSNPPLTASQSAAQAPESSAAGAARLPVAPRHLPTLEKFRAEQPTVQGTSTPTISANAALLIGSLLQSEKLPFEVMAARLSPERYALQQFHGSDLQQMLGRFAEPGHLPGKAETEQLIKGFARSLADQLEHFQLMHDATAEAFGPGGLRDRNTLAVSQAALGEYAGRASKSIEAGLNHSLAVLDERIAALDSQLEGATEDSRPVLLMDRQALETARAMLSDLHVDFCKSPEAKRLSAVAAHTQMDALIDKLNVDRSSVGGWKGIGPIVAAAVPQFMVSMLHLGYIRTATSDAMKDAVPEKSADASMKRALAVGLTAGVAHEGVTNLLKPMVQAGFQKAGLNERLNMVPLKGIDTDSVIPDPFELKNDNGALVRKTPEEAAEDKAFVASERAVLNQKKVQVSSTHPLGEMIPYGAFGGGQAVRQMLNDFNLLNGQTLSARAVTSGIAGAISATTQTIAQLNSTYVDPRGRKIPVFTPDRANADLGKDLAKGLDLREPAVRTAFYSKAVSGVQSAALNGALPSVAVQPQGASGTLSAGNIMRNMALAATGSVSYLSTLYANQSVTAEAKALKEAGMGGATPMVARTETALSNIRHPDRASLPHTFQPDTLGGVPRAVENAYHMARGALQLPTQVVVDTVRVVEDGVASGVSSLRDAHKPAETSSPTADDAAAVELTAMEEGRRR</sequence>
<organism>
    <name type="scientific">Pseudomonas syringae pv. syringae (strain B728a)</name>
    <dbReference type="NCBI Taxonomy" id="205918"/>
    <lineage>
        <taxon>Bacteria</taxon>
        <taxon>Pseudomonadati</taxon>
        <taxon>Pseudomonadota</taxon>
        <taxon>Gammaproteobacteria</taxon>
        <taxon>Pseudomonadales</taxon>
        <taxon>Pseudomonadaceae</taxon>
        <taxon>Pseudomonas</taxon>
        <taxon>Pseudomonas syringae</taxon>
    </lineage>
</organism>
<evidence type="ECO:0000250" key="1"/>
<evidence type="ECO:0000256" key="2">
    <source>
        <dbReference type="SAM" id="MobiDB-lite"/>
    </source>
</evidence>
<feature type="chain" id="PRO_0000260213" description="Effector protein hopM1">
    <location>
        <begin position="1"/>
        <end position="718"/>
    </location>
</feature>
<feature type="region of interest" description="Disordered" evidence="2">
    <location>
        <begin position="1"/>
        <end position="63"/>
    </location>
</feature>
<feature type="region of interest" description="Disordered" evidence="2">
    <location>
        <begin position="683"/>
        <end position="718"/>
    </location>
</feature>
<feature type="compositionally biased region" description="Gly residues" evidence="2">
    <location>
        <begin position="1"/>
        <end position="10"/>
    </location>
</feature>
<feature type="compositionally biased region" description="Polar residues" evidence="2">
    <location>
        <begin position="11"/>
        <end position="22"/>
    </location>
</feature>
<feature type="compositionally biased region" description="Low complexity" evidence="2">
    <location>
        <begin position="44"/>
        <end position="60"/>
    </location>
</feature>
<reference key="1">
    <citation type="journal article" date="2005" name="Proc. Natl. Acad. Sci. U.S.A.">
        <title>Comparison of the complete genome sequences of Pseudomonas syringae pv. syringae B728a and pv. tomato DC3000.</title>
        <authorList>
            <person name="Feil H."/>
            <person name="Feil W.S."/>
            <person name="Chain P."/>
            <person name="Larimer F."/>
            <person name="Dibartolo G."/>
            <person name="Copeland A."/>
            <person name="Lykidis A."/>
            <person name="Trong S."/>
            <person name="Nolan M."/>
            <person name="Goltsman E."/>
            <person name="Thiel J."/>
            <person name="Malfatti S."/>
            <person name="Loper J.E."/>
            <person name="Lapidus A."/>
            <person name="Detter J.C."/>
            <person name="Land M."/>
            <person name="Richardson P.M."/>
            <person name="Kyrpides N.C."/>
            <person name="Ivanova N."/>
            <person name="Lindow S.E."/>
        </authorList>
    </citation>
    <scope>NUCLEOTIDE SEQUENCE [LARGE SCALE GENOMIC DNA]</scope>
    <source>
        <strain>B728a</strain>
    </source>
</reference>